<dbReference type="EC" id="2.5.1.19" evidence="1"/>
<dbReference type="EMBL" id="CP000562">
    <property type="protein sequence ID" value="ABN57228.1"/>
    <property type="molecule type" value="Genomic_DNA"/>
</dbReference>
<dbReference type="RefSeq" id="WP_011844139.1">
    <property type="nucleotide sequence ID" value="NC_009051.1"/>
</dbReference>
<dbReference type="SMR" id="A3CV28"/>
<dbReference type="STRING" id="368407.Memar_1298"/>
<dbReference type="GeneID" id="4847583"/>
<dbReference type="GeneID" id="76729371"/>
<dbReference type="KEGG" id="mem:Memar_1298"/>
<dbReference type="eggNOG" id="arCOG04134">
    <property type="taxonomic scope" value="Archaea"/>
</dbReference>
<dbReference type="HOGENOM" id="CLU_024321_0_0_2"/>
<dbReference type="OrthoDB" id="43788at2157"/>
<dbReference type="UniPathway" id="UPA00053"/>
<dbReference type="Proteomes" id="UP000002146">
    <property type="component" value="Chromosome"/>
</dbReference>
<dbReference type="GO" id="GO:0005737">
    <property type="term" value="C:cytoplasm"/>
    <property type="evidence" value="ECO:0007669"/>
    <property type="project" value="UniProtKB-SubCell"/>
</dbReference>
<dbReference type="GO" id="GO:0003866">
    <property type="term" value="F:3-phosphoshikimate 1-carboxyvinyltransferase activity"/>
    <property type="evidence" value="ECO:0007669"/>
    <property type="project" value="UniProtKB-UniRule"/>
</dbReference>
<dbReference type="GO" id="GO:0008652">
    <property type="term" value="P:amino acid biosynthetic process"/>
    <property type="evidence" value="ECO:0007669"/>
    <property type="project" value="UniProtKB-KW"/>
</dbReference>
<dbReference type="GO" id="GO:0009073">
    <property type="term" value="P:aromatic amino acid family biosynthetic process"/>
    <property type="evidence" value="ECO:0007669"/>
    <property type="project" value="UniProtKB-KW"/>
</dbReference>
<dbReference type="GO" id="GO:0009423">
    <property type="term" value="P:chorismate biosynthetic process"/>
    <property type="evidence" value="ECO:0007669"/>
    <property type="project" value="UniProtKB-UniRule"/>
</dbReference>
<dbReference type="CDD" id="cd01556">
    <property type="entry name" value="EPSP_synthase"/>
    <property type="match status" value="1"/>
</dbReference>
<dbReference type="Gene3D" id="3.65.10.10">
    <property type="entry name" value="Enolpyruvate transferase domain"/>
    <property type="match status" value="2"/>
</dbReference>
<dbReference type="HAMAP" id="MF_00210">
    <property type="entry name" value="EPSP_synth"/>
    <property type="match status" value="1"/>
</dbReference>
<dbReference type="InterPro" id="IPR001986">
    <property type="entry name" value="Enolpyruvate_Tfrase_dom"/>
</dbReference>
<dbReference type="InterPro" id="IPR036968">
    <property type="entry name" value="Enolpyruvate_Tfrase_sf"/>
</dbReference>
<dbReference type="InterPro" id="IPR006264">
    <property type="entry name" value="EPSP_synthase"/>
</dbReference>
<dbReference type="InterPro" id="IPR023193">
    <property type="entry name" value="EPSP_synthase_CS"/>
</dbReference>
<dbReference type="InterPro" id="IPR013792">
    <property type="entry name" value="RNA3'P_cycl/enolpyr_Trfase_a/b"/>
</dbReference>
<dbReference type="NCBIfam" id="TIGR01356">
    <property type="entry name" value="aroA"/>
    <property type="match status" value="1"/>
</dbReference>
<dbReference type="PANTHER" id="PTHR21090">
    <property type="entry name" value="AROM/DEHYDROQUINATE SYNTHASE"/>
    <property type="match status" value="1"/>
</dbReference>
<dbReference type="PANTHER" id="PTHR21090:SF5">
    <property type="entry name" value="PENTAFUNCTIONAL AROM POLYPEPTIDE"/>
    <property type="match status" value="1"/>
</dbReference>
<dbReference type="Pfam" id="PF00275">
    <property type="entry name" value="EPSP_synthase"/>
    <property type="match status" value="1"/>
</dbReference>
<dbReference type="PIRSF" id="PIRSF000505">
    <property type="entry name" value="EPSPS"/>
    <property type="match status" value="1"/>
</dbReference>
<dbReference type="SUPFAM" id="SSF55205">
    <property type="entry name" value="EPT/RTPC-like"/>
    <property type="match status" value="1"/>
</dbReference>
<dbReference type="PROSITE" id="PS00104">
    <property type="entry name" value="EPSP_SYNTHASE_1"/>
    <property type="match status" value="1"/>
</dbReference>
<organism>
    <name type="scientific">Methanoculleus marisnigri (strain ATCC 35101 / DSM 1498 / JR1)</name>
    <dbReference type="NCBI Taxonomy" id="368407"/>
    <lineage>
        <taxon>Archaea</taxon>
        <taxon>Methanobacteriati</taxon>
        <taxon>Methanobacteriota</taxon>
        <taxon>Stenosarchaea group</taxon>
        <taxon>Methanomicrobia</taxon>
        <taxon>Methanomicrobiales</taxon>
        <taxon>Methanomicrobiaceae</taxon>
        <taxon>Methanoculleus</taxon>
    </lineage>
</organism>
<reference key="1">
    <citation type="journal article" date="2009" name="Stand. Genomic Sci.">
        <title>Complete genome sequence of Methanoculleus marisnigri Romesser et al. 1981 type strain JR1.</title>
        <authorList>
            <person name="Anderson I.J."/>
            <person name="Sieprawska-Lupa M."/>
            <person name="Lapidus A."/>
            <person name="Nolan M."/>
            <person name="Copeland A."/>
            <person name="Glavina Del Rio T."/>
            <person name="Tice H."/>
            <person name="Dalin E."/>
            <person name="Barry K."/>
            <person name="Saunders E."/>
            <person name="Han C."/>
            <person name="Brettin T."/>
            <person name="Detter J.C."/>
            <person name="Bruce D."/>
            <person name="Mikhailova N."/>
            <person name="Pitluck S."/>
            <person name="Hauser L."/>
            <person name="Land M."/>
            <person name="Lucas S."/>
            <person name="Richardson P."/>
            <person name="Whitman W.B."/>
            <person name="Kyrpides N.C."/>
        </authorList>
    </citation>
    <scope>NUCLEOTIDE SEQUENCE [LARGE SCALE GENOMIC DNA]</scope>
    <source>
        <strain>ATCC 35101 / DSM 1498 / JR1</strain>
    </source>
</reference>
<gene>
    <name evidence="1" type="primary">aroA</name>
    <name type="ordered locus">Memar_1298</name>
</gene>
<comment type="function">
    <text evidence="1">Catalyzes the transfer of the enolpyruvyl moiety of phosphoenolpyruvate (PEP) to the 5-hydroxyl of shikimate-3-phosphate (S3P) to produce enolpyruvyl shikimate-3-phosphate and inorganic phosphate.</text>
</comment>
<comment type="catalytic activity">
    <reaction evidence="1">
        <text>3-phosphoshikimate + phosphoenolpyruvate = 5-O-(1-carboxyvinyl)-3-phosphoshikimate + phosphate</text>
        <dbReference type="Rhea" id="RHEA:21256"/>
        <dbReference type="ChEBI" id="CHEBI:43474"/>
        <dbReference type="ChEBI" id="CHEBI:57701"/>
        <dbReference type="ChEBI" id="CHEBI:58702"/>
        <dbReference type="ChEBI" id="CHEBI:145989"/>
        <dbReference type="EC" id="2.5.1.19"/>
    </reaction>
    <physiologicalReaction direction="left-to-right" evidence="1">
        <dbReference type="Rhea" id="RHEA:21257"/>
    </physiologicalReaction>
</comment>
<comment type="pathway">
    <text evidence="1">Metabolic intermediate biosynthesis; chorismate biosynthesis.</text>
</comment>
<comment type="subunit">
    <text evidence="1">Monomer.</text>
</comment>
<comment type="subcellular location">
    <subcellularLocation>
        <location evidence="1">Cytoplasm</location>
    </subcellularLocation>
</comment>
<comment type="similarity">
    <text evidence="1">Belongs to the EPSP synthase family.</text>
</comment>
<keyword id="KW-0028">Amino-acid biosynthesis</keyword>
<keyword id="KW-0057">Aromatic amino acid biosynthesis</keyword>
<keyword id="KW-0963">Cytoplasm</keyword>
<keyword id="KW-0808">Transferase</keyword>
<feature type="chain" id="PRO_1000099719" description="3-phosphoshikimate 1-carboxyvinyltransferase">
    <location>
        <begin position="1"/>
        <end position="422"/>
    </location>
</feature>
<feature type="active site" description="Proton acceptor" evidence="1">
    <location>
        <position position="310"/>
    </location>
</feature>
<feature type="binding site" evidence="1">
    <location>
        <position position="21"/>
    </location>
    <ligand>
        <name>3-phosphoshikimate</name>
        <dbReference type="ChEBI" id="CHEBI:145989"/>
    </ligand>
</feature>
<feature type="binding site" evidence="1">
    <location>
        <position position="21"/>
    </location>
    <ligand>
        <name>phosphoenolpyruvate</name>
        <dbReference type="ChEBI" id="CHEBI:58702"/>
    </ligand>
</feature>
<feature type="binding site" evidence="1">
    <location>
        <position position="22"/>
    </location>
    <ligand>
        <name>3-phosphoshikimate</name>
        <dbReference type="ChEBI" id="CHEBI:145989"/>
    </ligand>
</feature>
<feature type="binding site" evidence="1">
    <location>
        <position position="26"/>
    </location>
    <ligand>
        <name>3-phosphoshikimate</name>
        <dbReference type="ChEBI" id="CHEBI:145989"/>
    </ligand>
</feature>
<feature type="binding site" evidence="1">
    <location>
        <position position="93"/>
    </location>
    <ligand>
        <name>phosphoenolpyruvate</name>
        <dbReference type="ChEBI" id="CHEBI:58702"/>
    </ligand>
</feature>
<feature type="binding site" evidence="1">
    <location>
        <position position="121"/>
    </location>
    <ligand>
        <name>phosphoenolpyruvate</name>
        <dbReference type="ChEBI" id="CHEBI:58702"/>
    </ligand>
</feature>
<feature type="binding site" evidence="1">
    <location>
        <position position="166"/>
    </location>
    <ligand>
        <name>3-phosphoshikimate</name>
        <dbReference type="ChEBI" id="CHEBI:145989"/>
    </ligand>
</feature>
<feature type="binding site" evidence="1">
    <location>
        <position position="167"/>
    </location>
    <ligand>
        <name>3-phosphoshikimate</name>
        <dbReference type="ChEBI" id="CHEBI:145989"/>
    </ligand>
</feature>
<feature type="binding site" evidence="1">
    <location>
        <position position="168"/>
    </location>
    <ligand>
        <name>3-phosphoshikimate</name>
        <dbReference type="ChEBI" id="CHEBI:145989"/>
    </ligand>
</feature>
<feature type="binding site" evidence="1">
    <location>
        <position position="168"/>
    </location>
    <ligand>
        <name>phosphoenolpyruvate</name>
        <dbReference type="ChEBI" id="CHEBI:58702"/>
    </ligand>
</feature>
<feature type="binding site" evidence="1">
    <location>
        <position position="194"/>
    </location>
    <ligand>
        <name>3-phosphoshikimate</name>
        <dbReference type="ChEBI" id="CHEBI:145989"/>
    </ligand>
</feature>
<feature type="binding site" evidence="1">
    <location>
        <position position="310"/>
    </location>
    <ligand>
        <name>3-phosphoshikimate</name>
        <dbReference type="ChEBI" id="CHEBI:145989"/>
    </ligand>
</feature>
<feature type="binding site" evidence="1">
    <location>
        <position position="337"/>
    </location>
    <ligand>
        <name>3-phosphoshikimate</name>
        <dbReference type="ChEBI" id="CHEBI:145989"/>
    </ligand>
</feature>
<feature type="binding site" evidence="1">
    <location>
        <position position="341"/>
    </location>
    <ligand>
        <name>phosphoenolpyruvate</name>
        <dbReference type="ChEBI" id="CHEBI:58702"/>
    </ligand>
</feature>
<feature type="binding site" evidence="1">
    <location>
        <position position="382"/>
    </location>
    <ligand>
        <name>phosphoenolpyruvate</name>
        <dbReference type="ChEBI" id="CHEBI:58702"/>
    </ligand>
</feature>
<feature type="binding site" evidence="1">
    <location>
        <position position="407"/>
    </location>
    <ligand>
        <name>phosphoenolpyruvate</name>
        <dbReference type="ChEBI" id="CHEBI:58702"/>
    </ligand>
</feature>
<sequence>MIVRVSQTGPVDAAFPAPPSKSYTHRALIAGALALGRTRIARPLRAADTELTARGLEALGVPLEWLPGEIAVAGCSGTFPAAGEVTIDCGNSGTTLRLLTSAALLSQHPVVLTGSPRMLERPVGPLAGALRALGGDVAFTGQPGYPPIRISGRLRGGRATIDGSISSQFVSSILMAAPYAEEDVELTLPATPASRSYLDVTADVMLRFGAHIERQGYDRFRVESGRAYRGRDYRVEGDYSSASYLFAVAAVCGGRVAVTGLNPTSVQGDRRFLDALEAMGCSVAAGTDAVTVERTGDLKGIEIDMSSSPDTVQTLAAVAATAGSPTTITGTAHLQYKESDRVGVTADTLRRMGAGVEVTEDSLTITPAPLHGVAVDPHDDHRTAMAFAVLGLAVGGMAIRDPECVEKSFPGFWEALYGEGLL</sequence>
<protein>
    <recommendedName>
        <fullName evidence="1">3-phosphoshikimate 1-carboxyvinyltransferase</fullName>
        <ecNumber evidence="1">2.5.1.19</ecNumber>
    </recommendedName>
    <alternativeName>
        <fullName evidence="1">5-enolpyruvylshikimate-3-phosphate synthase</fullName>
        <shortName evidence="1">EPSP synthase</shortName>
        <shortName evidence="1">EPSPS</shortName>
    </alternativeName>
</protein>
<evidence type="ECO:0000255" key="1">
    <source>
        <dbReference type="HAMAP-Rule" id="MF_00210"/>
    </source>
</evidence>
<name>AROA_METMJ</name>
<accession>A3CV28</accession>
<proteinExistence type="inferred from homology"/>